<reference key="1">
    <citation type="journal article" date="1998" name="Science">
        <title>Complete genome sequence of Treponema pallidum, the syphilis spirochete.</title>
        <authorList>
            <person name="Fraser C.M."/>
            <person name="Norris S.J."/>
            <person name="Weinstock G.M."/>
            <person name="White O."/>
            <person name="Sutton G.G."/>
            <person name="Dodson R.J."/>
            <person name="Gwinn M.L."/>
            <person name="Hickey E.K."/>
            <person name="Clayton R.A."/>
            <person name="Ketchum K.A."/>
            <person name="Sodergren E."/>
            <person name="Hardham J.M."/>
            <person name="McLeod M.P."/>
            <person name="Salzberg S.L."/>
            <person name="Peterson J.D."/>
            <person name="Khalak H.G."/>
            <person name="Richardson D.L."/>
            <person name="Howell J.K."/>
            <person name="Chidambaram M."/>
            <person name="Utterback T.R."/>
            <person name="McDonald L.A."/>
            <person name="Artiach P."/>
            <person name="Bowman C."/>
            <person name="Cotton M.D."/>
            <person name="Fujii C."/>
            <person name="Garland S.A."/>
            <person name="Hatch B."/>
            <person name="Horst K."/>
            <person name="Roberts K.M."/>
            <person name="Sandusky M."/>
            <person name="Weidman J.F."/>
            <person name="Smith H.O."/>
            <person name="Venter J.C."/>
        </authorList>
    </citation>
    <scope>NUCLEOTIDE SEQUENCE [LARGE SCALE GENOMIC DNA]</scope>
    <source>
        <strain>Nichols</strain>
    </source>
</reference>
<keyword id="KW-1185">Reference proteome</keyword>
<dbReference type="EMBL" id="AE000520">
    <property type="protein sequence ID" value="AAC65380.1"/>
    <property type="molecule type" value="Genomic_DNA"/>
</dbReference>
<dbReference type="PIR" id="A71330">
    <property type="entry name" value="A71330"/>
</dbReference>
<dbReference type="SMR" id="O83390"/>
<dbReference type="IntAct" id="O83390">
    <property type="interactions" value="1"/>
</dbReference>
<dbReference type="STRING" id="243276.TP_0375"/>
<dbReference type="EnsemblBacteria" id="AAC65380">
    <property type="protein sequence ID" value="AAC65380"/>
    <property type="gene ID" value="TP_0375"/>
</dbReference>
<dbReference type="KEGG" id="tpa:TP_0375"/>
<dbReference type="KEGG" id="tpw:TPANIC_0375"/>
<dbReference type="HOGENOM" id="CLU_2774752_0_0_12"/>
<dbReference type="Proteomes" id="UP000000811">
    <property type="component" value="Chromosome"/>
</dbReference>
<organism>
    <name type="scientific">Treponema pallidum (strain Nichols)</name>
    <dbReference type="NCBI Taxonomy" id="243276"/>
    <lineage>
        <taxon>Bacteria</taxon>
        <taxon>Pseudomonadati</taxon>
        <taxon>Spirochaetota</taxon>
        <taxon>Spirochaetia</taxon>
        <taxon>Spirochaetales</taxon>
        <taxon>Treponemataceae</taxon>
        <taxon>Treponema</taxon>
    </lineage>
</organism>
<feature type="chain" id="PRO_0000202245" description="Uncharacterized protein TP_0375">
    <location>
        <begin position="1"/>
        <end position="69"/>
    </location>
</feature>
<name>Y375_TREPA</name>
<proteinExistence type="predicted"/>
<protein>
    <recommendedName>
        <fullName>Uncharacterized protein TP_0375</fullName>
    </recommendedName>
</protein>
<sequence>MASVFSFLLMSAAGFPTLSTDSSIRSSRNALTLLRWICEAVSAAVPVSRPSANCVTYKAVISKFIARIA</sequence>
<accession>O83390</accession>
<gene>
    <name type="ordered locus">TP_0375</name>
</gene>